<name>ACPS_NITSB</name>
<accession>A6Q3W1</accession>
<dbReference type="EC" id="2.7.8.7" evidence="1"/>
<dbReference type="EMBL" id="AP009178">
    <property type="protein sequence ID" value="BAF70170.1"/>
    <property type="molecule type" value="Genomic_DNA"/>
</dbReference>
<dbReference type="RefSeq" id="WP_012082433.1">
    <property type="nucleotide sequence ID" value="NC_009662.1"/>
</dbReference>
<dbReference type="SMR" id="A6Q3W1"/>
<dbReference type="FunCoup" id="A6Q3W1">
    <property type="interactions" value="132"/>
</dbReference>
<dbReference type="STRING" id="387092.NIS_1060"/>
<dbReference type="KEGG" id="nis:NIS_1060"/>
<dbReference type="eggNOG" id="COG0736">
    <property type="taxonomic scope" value="Bacteria"/>
</dbReference>
<dbReference type="HOGENOM" id="CLU_089696_0_2_7"/>
<dbReference type="InParanoid" id="A6Q3W1"/>
<dbReference type="OrthoDB" id="517356at2"/>
<dbReference type="Proteomes" id="UP000001118">
    <property type="component" value="Chromosome"/>
</dbReference>
<dbReference type="GO" id="GO:0005737">
    <property type="term" value="C:cytoplasm"/>
    <property type="evidence" value="ECO:0007669"/>
    <property type="project" value="UniProtKB-SubCell"/>
</dbReference>
<dbReference type="GO" id="GO:0008897">
    <property type="term" value="F:holo-[acyl-carrier-protein] synthase activity"/>
    <property type="evidence" value="ECO:0007669"/>
    <property type="project" value="UniProtKB-UniRule"/>
</dbReference>
<dbReference type="GO" id="GO:0000287">
    <property type="term" value="F:magnesium ion binding"/>
    <property type="evidence" value="ECO:0007669"/>
    <property type="project" value="UniProtKB-UniRule"/>
</dbReference>
<dbReference type="GO" id="GO:0006633">
    <property type="term" value="P:fatty acid biosynthetic process"/>
    <property type="evidence" value="ECO:0007669"/>
    <property type="project" value="UniProtKB-UniRule"/>
</dbReference>
<dbReference type="Gene3D" id="3.90.470.20">
    <property type="entry name" value="4'-phosphopantetheinyl transferase domain"/>
    <property type="match status" value="1"/>
</dbReference>
<dbReference type="HAMAP" id="MF_00101">
    <property type="entry name" value="AcpS"/>
    <property type="match status" value="1"/>
</dbReference>
<dbReference type="InterPro" id="IPR008278">
    <property type="entry name" value="4-PPantetheinyl_Trfase_dom"/>
</dbReference>
<dbReference type="InterPro" id="IPR037143">
    <property type="entry name" value="4-PPantetheinyl_Trfase_dom_sf"/>
</dbReference>
<dbReference type="InterPro" id="IPR002582">
    <property type="entry name" value="ACPS"/>
</dbReference>
<dbReference type="InterPro" id="IPR004568">
    <property type="entry name" value="Ppantetheine-prot_Trfase_dom"/>
</dbReference>
<dbReference type="NCBIfam" id="TIGR00516">
    <property type="entry name" value="acpS"/>
    <property type="match status" value="1"/>
</dbReference>
<dbReference type="NCBIfam" id="TIGR00556">
    <property type="entry name" value="pantethn_trn"/>
    <property type="match status" value="1"/>
</dbReference>
<dbReference type="Pfam" id="PF01648">
    <property type="entry name" value="ACPS"/>
    <property type="match status" value="1"/>
</dbReference>
<dbReference type="SUPFAM" id="SSF56214">
    <property type="entry name" value="4'-phosphopantetheinyl transferase"/>
    <property type="match status" value="1"/>
</dbReference>
<sequence>MIGIDIVQIERIEQLIEKYGQKGLERFLLPQEMEVAKKPQTVAGFWAAKEAVAKALKTGIGKELGFHDIFIYKTEKGAPEFKLLNGKEQMFRIQQTALSISHDAGVAVAVAVIIRC</sequence>
<organism>
    <name type="scientific">Nitratiruptor sp. (strain SB155-2)</name>
    <dbReference type="NCBI Taxonomy" id="387092"/>
    <lineage>
        <taxon>Bacteria</taxon>
        <taxon>Pseudomonadati</taxon>
        <taxon>Campylobacterota</taxon>
        <taxon>Epsilonproteobacteria</taxon>
        <taxon>Nautiliales</taxon>
        <taxon>Nitratiruptoraceae</taxon>
        <taxon>Nitratiruptor</taxon>
    </lineage>
</organism>
<feature type="chain" id="PRO_1000008465" description="Holo-[acyl-carrier-protein] synthase">
    <location>
        <begin position="1"/>
        <end position="116"/>
    </location>
</feature>
<feature type="binding site" evidence="1">
    <location>
        <position position="5"/>
    </location>
    <ligand>
        <name>Mg(2+)</name>
        <dbReference type="ChEBI" id="CHEBI:18420"/>
    </ligand>
</feature>
<feature type="binding site" evidence="1">
    <location>
        <position position="50"/>
    </location>
    <ligand>
        <name>Mg(2+)</name>
        <dbReference type="ChEBI" id="CHEBI:18420"/>
    </ligand>
</feature>
<keyword id="KW-0963">Cytoplasm</keyword>
<keyword id="KW-0275">Fatty acid biosynthesis</keyword>
<keyword id="KW-0276">Fatty acid metabolism</keyword>
<keyword id="KW-0444">Lipid biosynthesis</keyword>
<keyword id="KW-0443">Lipid metabolism</keyword>
<keyword id="KW-0460">Magnesium</keyword>
<keyword id="KW-0479">Metal-binding</keyword>
<keyword id="KW-1185">Reference proteome</keyword>
<keyword id="KW-0808">Transferase</keyword>
<reference key="1">
    <citation type="journal article" date="2007" name="Proc. Natl. Acad. Sci. U.S.A.">
        <title>Deep-sea vent epsilon-proteobacterial genomes provide insights into emergence of pathogens.</title>
        <authorList>
            <person name="Nakagawa S."/>
            <person name="Takaki Y."/>
            <person name="Shimamura S."/>
            <person name="Reysenbach A.-L."/>
            <person name="Takai K."/>
            <person name="Horikoshi K."/>
        </authorList>
    </citation>
    <scope>NUCLEOTIDE SEQUENCE [LARGE SCALE GENOMIC DNA]</scope>
    <source>
        <strain>SB155-2</strain>
    </source>
</reference>
<gene>
    <name evidence="1" type="primary">acpS</name>
    <name type="ordered locus">NIS_1060</name>
</gene>
<comment type="function">
    <text evidence="1">Transfers the 4'-phosphopantetheine moiety from coenzyme A to a Ser of acyl-carrier-protein.</text>
</comment>
<comment type="catalytic activity">
    <reaction evidence="1">
        <text>apo-[ACP] + CoA = holo-[ACP] + adenosine 3',5'-bisphosphate + H(+)</text>
        <dbReference type="Rhea" id="RHEA:12068"/>
        <dbReference type="Rhea" id="RHEA-COMP:9685"/>
        <dbReference type="Rhea" id="RHEA-COMP:9690"/>
        <dbReference type="ChEBI" id="CHEBI:15378"/>
        <dbReference type="ChEBI" id="CHEBI:29999"/>
        <dbReference type="ChEBI" id="CHEBI:57287"/>
        <dbReference type="ChEBI" id="CHEBI:58343"/>
        <dbReference type="ChEBI" id="CHEBI:64479"/>
        <dbReference type="EC" id="2.7.8.7"/>
    </reaction>
</comment>
<comment type="cofactor">
    <cofactor evidence="1">
        <name>Mg(2+)</name>
        <dbReference type="ChEBI" id="CHEBI:18420"/>
    </cofactor>
</comment>
<comment type="subcellular location">
    <subcellularLocation>
        <location evidence="1">Cytoplasm</location>
    </subcellularLocation>
</comment>
<comment type="similarity">
    <text evidence="1">Belongs to the P-Pant transferase superfamily. AcpS family.</text>
</comment>
<protein>
    <recommendedName>
        <fullName evidence="1">Holo-[acyl-carrier-protein] synthase</fullName>
        <shortName evidence="1">Holo-ACP synthase</shortName>
        <ecNumber evidence="1">2.7.8.7</ecNumber>
    </recommendedName>
    <alternativeName>
        <fullName evidence="1">4'-phosphopantetheinyl transferase AcpS</fullName>
    </alternativeName>
</protein>
<evidence type="ECO:0000255" key="1">
    <source>
        <dbReference type="HAMAP-Rule" id="MF_00101"/>
    </source>
</evidence>
<proteinExistence type="inferred from homology"/>